<name>FABZ_SYMTH</name>
<reference key="1">
    <citation type="journal article" date="2004" name="Nucleic Acids Res.">
        <title>Genome sequence of Symbiobacterium thermophilum, an uncultivable bacterium that depends on microbial commensalism.</title>
        <authorList>
            <person name="Ueda K."/>
            <person name="Yamashita A."/>
            <person name="Ishikawa J."/>
            <person name="Shimada M."/>
            <person name="Watsuji T."/>
            <person name="Morimura K."/>
            <person name="Ikeda H."/>
            <person name="Hattori M."/>
            <person name="Beppu T."/>
        </authorList>
    </citation>
    <scope>NUCLEOTIDE SEQUENCE [LARGE SCALE GENOMIC DNA]</scope>
    <source>
        <strain>DSM 24528 / JCM 14929 / IAM 14863 / T</strain>
    </source>
</reference>
<sequence length="142" mass="15449">MEIIPHRHPFLLIDRVLELEPGRRVVAVKNVSMNEPVFQGHYPGNPIFPGVLILEAMAQAGAVAVLSQPEFAGKVPLFAGIDDARFRRPVLPGDQLRLEVEMVAMRRGLGVGKGMAYVGDELKAEATLKFALVDAATPEPAR</sequence>
<dbReference type="EC" id="4.2.1.59" evidence="1"/>
<dbReference type="EMBL" id="AP006840">
    <property type="protein sequence ID" value="BAD39102.1"/>
    <property type="molecule type" value="Genomic_DNA"/>
</dbReference>
<dbReference type="SMR" id="Q67T91"/>
<dbReference type="STRING" id="292459.STH117"/>
<dbReference type="KEGG" id="sth:STH117"/>
<dbReference type="eggNOG" id="COG0764">
    <property type="taxonomic scope" value="Bacteria"/>
</dbReference>
<dbReference type="HOGENOM" id="CLU_078912_3_0_9"/>
<dbReference type="Proteomes" id="UP000000417">
    <property type="component" value="Chromosome"/>
</dbReference>
<dbReference type="GO" id="GO:0005737">
    <property type="term" value="C:cytoplasm"/>
    <property type="evidence" value="ECO:0007669"/>
    <property type="project" value="UniProtKB-SubCell"/>
</dbReference>
<dbReference type="GO" id="GO:0016020">
    <property type="term" value="C:membrane"/>
    <property type="evidence" value="ECO:0007669"/>
    <property type="project" value="GOC"/>
</dbReference>
<dbReference type="GO" id="GO:0019171">
    <property type="term" value="F:(3R)-hydroxyacyl-[acyl-carrier-protein] dehydratase activity"/>
    <property type="evidence" value="ECO:0007669"/>
    <property type="project" value="UniProtKB-EC"/>
</dbReference>
<dbReference type="GO" id="GO:0006633">
    <property type="term" value="P:fatty acid biosynthetic process"/>
    <property type="evidence" value="ECO:0007669"/>
    <property type="project" value="UniProtKB-UniRule"/>
</dbReference>
<dbReference type="GO" id="GO:0009245">
    <property type="term" value="P:lipid A biosynthetic process"/>
    <property type="evidence" value="ECO:0007669"/>
    <property type="project" value="UniProtKB-UniRule"/>
</dbReference>
<dbReference type="CDD" id="cd01288">
    <property type="entry name" value="FabZ"/>
    <property type="match status" value="1"/>
</dbReference>
<dbReference type="FunFam" id="3.10.129.10:FF:000001">
    <property type="entry name" value="3-hydroxyacyl-[acyl-carrier-protein] dehydratase FabZ"/>
    <property type="match status" value="1"/>
</dbReference>
<dbReference type="Gene3D" id="3.10.129.10">
    <property type="entry name" value="Hotdog Thioesterase"/>
    <property type="match status" value="1"/>
</dbReference>
<dbReference type="HAMAP" id="MF_00406">
    <property type="entry name" value="FabZ"/>
    <property type="match status" value="1"/>
</dbReference>
<dbReference type="InterPro" id="IPR013114">
    <property type="entry name" value="FabA_FabZ"/>
</dbReference>
<dbReference type="InterPro" id="IPR010084">
    <property type="entry name" value="FabZ"/>
</dbReference>
<dbReference type="InterPro" id="IPR029069">
    <property type="entry name" value="HotDog_dom_sf"/>
</dbReference>
<dbReference type="NCBIfam" id="TIGR01750">
    <property type="entry name" value="fabZ"/>
    <property type="match status" value="1"/>
</dbReference>
<dbReference type="NCBIfam" id="NF000582">
    <property type="entry name" value="PRK00006.1"/>
    <property type="match status" value="1"/>
</dbReference>
<dbReference type="PANTHER" id="PTHR30272">
    <property type="entry name" value="3-HYDROXYACYL-[ACYL-CARRIER-PROTEIN] DEHYDRATASE"/>
    <property type="match status" value="1"/>
</dbReference>
<dbReference type="PANTHER" id="PTHR30272:SF1">
    <property type="entry name" value="3-HYDROXYACYL-[ACYL-CARRIER-PROTEIN] DEHYDRATASE"/>
    <property type="match status" value="1"/>
</dbReference>
<dbReference type="Pfam" id="PF07977">
    <property type="entry name" value="FabA"/>
    <property type="match status" value="1"/>
</dbReference>
<dbReference type="SUPFAM" id="SSF54637">
    <property type="entry name" value="Thioesterase/thiol ester dehydrase-isomerase"/>
    <property type="match status" value="1"/>
</dbReference>
<organism>
    <name type="scientific">Symbiobacterium thermophilum (strain DSM 24528 / JCM 14929 / IAM 14863 / T)</name>
    <dbReference type="NCBI Taxonomy" id="292459"/>
    <lineage>
        <taxon>Bacteria</taxon>
        <taxon>Bacillati</taxon>
        <taxon>Bacillota</taxon>
        <taxon>Clostridia</taxon>
        <taxon>Eubacteriales</taxon>
        <taxon>Symbiobacteriaceae</taxon>
        <taxon>Symbiobacterium</taxon>
    </lineage>
</organism>
<feature type="chain" id="PRO_0000091749" description="3-hydroxyacyl-[acyl-carrier-protein] dehydratase FabZ">
    <location>
        <begin position="1"/>
        <end position="142"/>
    </location>
</feature>
<feature type="active site" evidence="1">
    <location>
        <position position="41"/>
    </location>
</feature>
<protein>
    <recommendedName>
        <fullName evidence="1">3-hydroxyacyl-[acyl-carrier-protein] dehydratase FabZ</fullName>
        <ecNumber evidence="1">4.2.1.59</ecNumber>
    </recommendedName>
    <alternativeName>
        <fullName evidence="1">(3R)-hydroxymyristoyl-[acyl-carrier-protein] dehydratase</fullName>
        <shortName evidence="1">(3R)-hydroxymyristoyl-ACP dehydrase</shortName>
    </alternativeName>
    <alternativeName>
        <fullName evidence="1">Beta-hydroxyacyl-ACP dehydratase</fullName>
    </alternativeName>
</protein>
<proteinExistence type="inferred from homology"/>
<comment type="function">
    <text evidence="1">Involved in unsaturated fatty acids biosynthesis. Catalyzes the dehydration of short chain beta-hydroxyacyl-ACPs and long chain saturated and unsaturated beta-hydroxyacyl-ACPs.</text>
</comment>
<comment type="catalytic activity">
    <reaction evidence="1">
        <text>a (3R)-hydroxyacyl-[ACP] = a (2E)-enoyl-[ACP] + H2O</text>
        <dbReference type="Rhea" id="RHEA:13097"/>
        <dbReference type="Rhea" id="RHEA-COMP:9925"/>
        <dbReference type="Rhea" id="RHEA-COMP:9945"/>
        <dbReference type="ChEBI" id="CHEBI:15377"/>
        <dbReference type="ChEBI" id="CHEBI:78784"/>
        <dbReference type="ChEBI" id="CHEBI:78827"/>
        <dbReference type="EC" id="4.2.1.59"/>
    </reaction>
</comment>
<comment type="subcellular location">
    <subcellularLocation>
        <location evidence="1">Cytoplasm</location>
    </subcellularLocation>
</comment>
<comment type="similarity">
    <text evidence="1">Belongs to the thioester dehydratase family. FabZ subfamily.</text>
</comment>
<gene>
    <name evidence="1" type="primary">fabZ</name>
    <name type="ordered locus">STH117</name>
</gene>
<keyword id="KW-0963">Cytoplasm</keyword>
<keyword id="KW-0441">Lipid A biosynthesis</keyword>
<keyword id="KW-0444">Lipid biosynthesis</keyword>
<keyword id="KW-0443">Lipid metabolism</keyword>
<keyword id="KW-0456">Lyase</keyword>
<keyword id="KW-1185">Reference proteome</keyword>
<accession>Q67T91</accession>
<evidence type="ECO:0000255" key="1">
    <source>
        <dbReference type="HAMAP-Rule" id="MF_00406"/>
    </source>
</evidence>